<dbReference type="EMBL" id="CP001472">
    <property type="protein sequence ID" value="ACO32406.1"/>
    <property type="molecule type" value="Genomic_DNA"/>
</dbReference>
<dbReference type="RefSeq" id="WP_015897809.1">
    <property type="nucleotide sequence ID" value="NC_012483.1"/>
</dbReference>
<dbReference type="SMR" id="C1F354"/>
<dbReference type="FunCoup" id="C1F354">
    <property type="interactions" value="557"/>
</dbReference>
<dbReference type="STRING" id="240015.ACP_2746"/>
<dbReference type="KEGG" id="aca:ACP_2746"/>
<dbReference type="eggNOG" id="COG0211">
    <property type="taxonomic scope" value="Bacteria"/>
</dbReference>
<dbReference type="HOGENOM" id="CLU_095424_4_0_0"/>
<dbReference type="InParanoid" id="C1F354"/>
<dbReference type="OrthoDB" id="9803474at2"/>
<dbReference type="Proteomes" id="UP000002207">
    <property type="component" value="Chromosome"/>
</dbReference>
<dbReference type="GO" id="GO:0022625">
    <property type="term" value="C:cytosolic large ribosomal subunit"/>
    <property type="evidence" value="ECO:0007669"/>
    <property type="project" value="TreeGrafter"/>
</dbReference>
<dbReference type="GO" id="GO:0003735">
    <property type="term" value="F:structural constituent of ribosome"/>
    <property type="evidence" value="ECO:0007669"/>
    <property type="project" value="InterPro"/>
</dbReference>
<dbReference type="GO" id="GO:0006412">
    <property type="term" value="P:translation"/>
    <property type="evidence" value="ECO:0007669"/>
    <property type="project" value="UniProtKB-UniRule"/>
</dbReference>
<dbReference type="FunFam" id="2.40.50.100:FF:000004">
    <property type="entry name" value="50S ribosomal protein L27"/>
    <property type="match status" value="1"/>
</dbReference>
<dbReference type="Gene3D" id="2.40.50.100">
    <property type="match status" value="1"/>
</dbReference>
<dbReference type="HAMAP" id="MF_00539">
    <property type="entry name" value="Ribosomal_bL27"/>
    <property type="match status" value="1"/>
</dbReference>
<dbReference type="InterPro" id="IPR001684">
    <property type="entry name" value="Ribosomal_bL27"/>
</dbReference>
<dbReference type="InterPro" id="IPR018261">
    <property type="entry name" value="Ribosomal_bL27_CS"/>
</dbReference>
<dbReference type="NCBIfam" id="TIGR00062">
    <property type="entry name" value="L27"/>
    <property type="match status" value="1"/>
</dbReference>
<dbReference type="PANTHER" id="PTHR15893:SF0">
    <property type="entry name" value="LARGE RIBOSOMAL SUBUNIT PROTEIN BL27M"/>
    <property type="match status" value="1"/>
</dbReference>
<dbReference type="PANTHER" id="PTHR15893">
    <property type="entry name" value="RIBOSOMAL PROTEIN L27"/>
    <property type="match status" value="1"/>
</dbReference>
<dbReference type="Pfam" id="PF01016">
    <property type="entry name" value="Ribosomal_L27"/>
    <property type="match status" value="1"/>
</dbReference>
<dbReference type="PRINTS" id="PR00063">
    <property type="entry name" value="RIBOSOMALL27"/>
</dbReference>
<dbReference type="SUPFAM" id="SSF110324">
    <property type="entry name" value="Ribosomal L27 protein-like"/>
    <property type="match status" value="1"/>
</dbReference>
<dbReference type="PROSITE" id="PS00831">
    <property type="entry name" value="RIBOSOMAL_L27"/>
    <property type="match status" value="1"/>
</dbReference>
<name>RL27_ACIC5</name>
<reference key="1">
    <citation type="journal article" date="2009" name="Appl. Environ. Microbiol.">
        <title>Three genomes from the phylum Acidobacteria provide insight into the lifestyles of these microorganisms in soils.</title>
        <authorList>
            <person name="Ward N.L."/>
            <person name="Challacombe J.F."/>
            <person name="Janssen P.H."/>
            <person name="Henrissat B."/>
            <person name="Coutinho P.M."/>
            <person name="Wu M."/>
            <person name="Xie G."/>
            <person name="Haft D.H."/>
            <person name="Sait M."/>
            <person name="Badger J."/>
            <person name="Barabote R.D."/>
            <person name="Bradley B."/>
            <person name="Brettin T.S."/>
            <person name="Brinkac L.M."/>
            <person name="Bruce D."/>
            <person name="Creasy T."/>
            <person name="Daugherty S.C."/>
            <person name="Davidsen T.M."/>
            <person name="DeBoy R.T."/>
            <person name="Detter J.C."/>
            <person name="Dodson R.J."/>
            <person name="Durkin A.S."/>
            <person name="Ganapathy A."/>
            <person name="Gwinn-Giglio M."/>
            <person name="Han C.S."/>
            <person name="Khouri H."/>
            <person name="Kiss H."/>
            <person name="Kothari S.P."/>
            <person name="Madupu R."/>
            <person name="Nelson K.E."/>
            <person name="Nelson W.C."/>
            <person name="Paulsen I."/>
            <person name="Penn K."/>
            <person name="Ren Q."/>
            <person name="Rosovitz M.J."/>
            <person name="Selengut J.D."/>
            <person name="Shrivastava S."/>
            <person name="Sullivan S.A."/>
            <person name="Tapia R."/>
            <person name="Thompson L.S."/>
            <person name="Watkins K.L."/>
            <person name="Yang Q."/>
            <person name="Yu C."/>
            <person name="Zafar N."/>
            <person name="Zhou L."/>
            <person name="Kuske C.R."/>
        </authorList>
    </citation>
    <scope>NUCLEOTIDE SEQUENCE [LARGE SCALE GENOMIC DNA]</scope>
    <source>
        <strain>ATCC 51196 / DSM 11244 / BCRC 80197 / JCM 7670 / NBRC 15755 / NCIMB 13165 / 161</strain>
    </source>
</reference>
<feature type="chain" id="PRO_1000195867" description="Large ribosomal subunit protein bL27">
    <location>
        <begin position="1"/>
        <end position="88"/>
    </location>
</feature>
<accession>C1F354</accession>
<proteinExistence type="inferred from homology"/>
<evidence type="ECO:0000255" key="1">
    <source>
        <dbReference type="HAMAP-Rule" id="MF_00539"/>
    </source>
</evidence>
<evidence type="ECO:0000305" key="2"/>
<gene>
    <name evidence="1" type="primary">rpmA</name>
    <name type="ordered locus">ACP_2746</name>
</gene>
<organism>
    <name type="scientific">Acidobacterium capsulatum (strain ATCC 51196 / DSM 11244 / BCRC 80197 / JCM 7670 / NBRC 15755 / NCIMB 13165 / 161)</name>
    <dbReference type="NCBI Taxonomy" id="240015"/>
    <lineage>
        <taxon>Bacteria</taxon>
        <taxon>Pseudomonadati</taxon>
        <taxon>Acidobacteriota</taxon>
        <taxon>Terriglobia</taxon>
        <taxon>Terriglobales</taxon>
        <taxon>Acidobacteriaceae</taxon>
        <taxon>Acidobacterium</taxon>
    </lineage>
</organism>
<keyword id="KW-1185">Reference proteome</keyword>
<keyword id="KW-0687">Ribonucleoprotein</keyword>
<keyword id="KW-0689">Ribosomal protein</keyword>
<comment type="similarity">
    <text evidence="1">Belongs to the bacterial ribosomal protein bL27 family.</text>
</comment>
<protein>
    <recommendedName>
        <fullName evidence="1">Large ribosomal subunit protein bL27</fullName>
    </recommendedName>
    <alternativeName>
        <fullName evidence="2">50S ribosomal protein L27</fullName>
    </alternativeName>
</protein>
<sequence length="88" mass="9309">MAHKKGLGSSKNGRDSNAQRLGVKAFGGQVVTGGSIIVRQRGTRLKPGQNVGRGSDDTLFALIDGKVKFVDRGRMGRFVAVEPVEAAQ</sequence>